<name>MTRH_METKA</name>
<feature type="chain" id="PRO_0000147564" description="Tetrahydromethanopterin S-methyltransferase subunit H">
    <location>
        <begin position="1"/>
        <end position="322"/>
    </location>
</feature>
<feature type="sequence conflict" description="In Ref. 1." evidence="2" ref="1">
    <original>MFYY</original>
    <variation>MDRCSTT</variation>
    <location>
        <begin position="1"/>
        <end position="4"/>
    </location>
</feature>
<feature type="sequence conflict" description="In Ref. 1; CAA74773." evidence="2" ref="1">
    <original>A</original>
    <variation>G</variation>
    <location>
        <position position="117"/>
    </location>
</feature>
<comment type="function">
    <text evidence="1">Part of a complex that catalyzes the formation of methyl-coenzyme M and tetrahydromethanopterin from coenzyme M and methyl-tetrahydromethanopterin. This is an energy-conserving, sodium-ion translocating step. MtrH catalyzes the transfer of the methyl group from methyl-tetrahydromethanopterin to the corrinoid prosthetic group of MtrA.</text>
</comment>
<comment type="catalytic activity">
    <reaction evidence="1">
        <text>5-methyl-5,6,7,8-tetrahydromethanopterin + coenzyme M + 2 Na(+)(in) = 5,6,7,8-tetrahydromethanopterin + methyl-coenzyme M + 2 Na(+)(out)</text>
        <dbReference type="Rhea" id="RHEA:53492"/>
        <dbReference type="ChEBI" id="CHEBI:29101"/>
        <dbReference type="ChEBI" id="CHEBI:58103"/>
        <dbReference type="ChEBI" id="CHEBI:58116"/>
        <dbReference type="ChEBI" id="CHEBI:58286"/>
        <dbReference type="ChEBI" id="CHEBI:58319"/>
        <dbReference type="EC" id="7.2.1.4"/>
    </reaction>
</comment>
<comment type="pathway">
    <text evidence="1">One-carbon metabolism; methanogenesis from CO(2); methyl-coenzyme M from 5,10-methylene-5,6,7,8-tetrahydromethanopterin: step 2/2.</text>
</comment>
<comment type="subunit">
    <text evidence="1">The complex is composed of 8 subunits; MtrA, MtrB, MtrC, MtrD, MtrE, MtrF, MtrG and MtrH.</text>
</comment>
<comment type="similarity">
    <text evidence="1">Belongs to the MtrH family.</text>
</comment>
<gene>
    <name evidence="1" type="primary">mtrH</name>
    <name type="ordered locus">MK0662</name>
</gene>
<reference key="1">
    <citation type="journal article" date="1997" name="Eur. J. Biochem.">
        <title>Identification of the active site histidine in the corrinoid protein MtrA of the energy-conserving methyltransferase complex from Methanobacterium thermoautotrophicum.</title>
        <authorList>
            <person name="Harms U."/>
            <person name="Thauer R.K."/>
        </authorList>
    </citation>
    <scope>NUCLEOTIDE SEQUENCE [GENOMIC DNA]</scope>
</reference>
<reference key="2">
    <citation type="journal article" date="2002" name="Proc. Natl. Acad. Sci. U.S.A.">
        <title>The complete genome of hyperthermophile Methanopyrus kandleri AV19 and monophyly of archaeal methanogens.</title>
        <authorList>
            <person name="Slesarev A.I."/>
            <person name="Mezhevaya K.V."/>
            <person name="Makarova K.S."/>
            <person name="Polushin N.N."/>
            <person name="Shcherbinina O.V."/>
            <person name="Shakhova V.V."/>
            <person name="Belova G.I."/>
            <person name="Aravind L."/>
            <person name="Natale D.A."/>
            <person name="Rogozin I.B."/>
            <person name="Tatusov R.L."/>
            <person name="Wolf Y.I."/>
            <person name="Stetter K.O."/>
            <person name="Malykh A.G."/>
            <person name="Koonin E.V."/>
            <person name="Kozyavkin S.A."/>
        </authorList>
    </citation>
    <scope>NUCLEOTIDE SEQUENCE [LARGE SCALE GENOMIC DNA]</scope>
    <source>
        <strain>AV19 / DSM 6324 / JCM 9639 / NBRC 100938</strain>
    </source>
</reference>
<organism>
    <name type="scientific">Methanopyrus kandleri (strain AV19 / DSM 6324 / JCM 9639 / NBRC 100938)</name>
    <dbReference type="NCBI Taxonomy" id="190192"/>
    <lineage>
        <taxon>Archaea</taxon>
        <taxon>Methanobacteriati</taxon>
        <taxon>Methanobacteriota</taxon>
        <taxon>Methanomada group</taxon>
        <taxon>Methanopyri</taxon>
        <taxon>Methanopyrales</taxon>
        <taxon>Methanopyraceae</taxon>
        <taxon>Methanopyrus</taxon>
    </lineage>
</organism>
<dbReference type="EC" id="7.2.1.4" evidence="1"/>
<dbReference type="EMBL" id="Y14428">
    <property type="protein sequence ID" value="CAA74773.1"/>
    <property type="molecule type" value="Genomic_DNA"/>
</dbReference>
<dbReference type="EMBL" id="AE009439">
    <property type="protein sequence ID" value="AAM01877.1"/>
    <property type="molecule type" value="Genomic_DNA"/>
</dbReference>
<dbReference type="RefSeq" id="WP_011019032.1">
    <property type="nucleotide sequence ID" value="NC_003551.1"/>
</dbReference>
<dbReference type="SMR" id="O32869"/>
<dbReference type="FunCoup" id="O32869">
    <property type="interactions" value="64"/>
</dbReference>
<dbReference type="STRING" id="190192.MK0662"/>
<dbReference type="PaxDb" id="190192-MK0662"/>
<dbReference type="EnsemblBacteria" id="AAM01877">
    <property type="protein sequence ID" value="AAM01877"/>
    <property type="gene ID" value="MK0662"/>
</dbReference>
<dbReference type="GeneID" id="1476763"/>
<dbReference type="KEGG" id="mka:MK0662"/>
<dbReference type="PATRIC" id="fig|190192.8.peg.701"/>
<dbReference type="HOGENOM" id="CLU_048697_0_0_2"/>
<dbReference type="InParanoid" id="O32869"/>
<dbReference type="OrthoDB" id="18811at2157"/>
<dbReference type="UniPathway" id="UPA00640">
    <property type="reaction ID" value="UER00698"/>
</dbReference>
<dbReference type="Proteomes" id="UP000001826">
    <property type="component" value="Chromosome"/>
</dbReference>
<dbReference type="GO" id="GO:0030269">
    <property type="term" value="F:tetrahydromethanopterin S-methyltransferase activity"/>
    <property type="evidence" value="ECO:0007669"/>
    <property type="project" value="UniProtKB-UniRule"/>
</dbReference>
<dbReference type="GO" id="GO:0019386">
    <property type="term" value="P:methanogenesis, from carbon dioxide"/>
    <property type="evidence" value="ECO:0007669"/>
    <property type="project" value="UniProtKB-UniRule"/>
</dbReference>
<dbReference type="GO" id="GO:0032259">
    <property type="term" value="P:methylation"/>
    <property type="evidence" value="ECO:0007669"/>
    <property type="project" value="UniProtKB-KW"/>
</dbReference>
<dbReference type="GO" id="GO:0006730">
    <property type="term" value="P:one-carbon metabolic process"/>
    <property type="evidence" value="ECO:0007669"/>
    <property type="project" value="UniProtKB-UniRule"/>
</dbReference>
<dbReference type="Gene3D" id="3.20.20.20">
    <property type="entry name" value="Dihydropteroate synthase-like"/>
    <property type="match status" value="1"/>
</dbReference>
<dbReference type="HAMAP" id="MF_01501">
    <property type="entry name" value="MtrH"/>
    <property type="match status" value="1"/>
</dbReference>
<dbReference type="InterPro" id="IPR011005">
    <property type="entry name" value="Dihydropteroate_synth-like_sf"/>
</dbReference>
<dbReference type="InterPro" id="IPR023467">
    <property type="entry name" value="MeTrfase_MtrH/MtxH"/>
</dbReference>
<dbReference type="InterPro" id="IPR028342">
    <property type="entry name" value="MtrH"/>
</dbReference>
<dbReference type="NCBIfam" id="TIGR01114">
    <property type="entry name" value="mtrH"/>
    <property type="match status" value="1"/>
</dbReference>
<dbReference type="Pfam" id="PF02007">
    <property type="entry name" value="MtrH"/>
    <property type="match status" value="1"/>
</dbReference>
<dbReference type="PIRSF" id="PIRSF500206">
    <property type="entry name" value="MtrH"/>
    <property type="match status" value="1"/>
</dbReference>
<dbReference type="PIRSF" id="PIRSF004960">
    <property type="entry name" value="MtrH_MtxH"/>
    <property type="match status" value="1"/>
</dbReference>
<dbReference type="SUPFAM" id="SSF51717">
    <property type="entry name" value="Dihydropteroate synthetase-like"/>
    <property type="match status" value="1"/>
</dbReference>
<proteinExistence type="inferred from homology"/>
<accession>O32869</accession>
<protein>
    <recommendedName>
        <fullName evidence="1">Tetrahydromethanopterin S-methyltransferase subunit H</fullName>
        <ecNumber evidence="1">7.2.1.4</ecNumber>
    </recommendedName>
    <alternativeName>
        <fullName evidence="1">N5-methyltetrahydromethanopterin--coenzyme M methyltransferase subunit H</fullName>
    </alternativeName>
</protein>
<sequence>MFYYPGKEQKVCDICGVKVGGQPGEYPTVLAGTIFYAGHKIVKDEDKGIFDEEAAEELIKMEEELADETGNPMMAHIMGESEEAIIRYLDWVADVTDAPIIVDSTEAEVKVAAVKHAQEVGLAERVVYNSINASVEDEEIQAIKESDCNSAIVLAFNPMDASVEGRMKILTEGEEGVSEKGMLEISDECGIENPLIDTAYTPFGSGAGTAYKVTLAVKAKLGLPVGGAPHNVPSAWDWLRDFMKKLKEEGKEEWAELAHESSDWGSNVVAATLCCDYLLFGPIENAPAIWPVVAMVDALIVEANEDVGVEPQVEEHPANIVR</sequence>
<keyword id="KW-0484">Methanogenesis</keyword>
<keyword id="KW-0489">Methyltransferase</keyword>
<keyword id="KW-0554">One-carbon metabolism</keyword>
<keyword id="KW-1185">Reference proteome</keyword>
<keyword id="KW-0808">Transferase</keyword>
<keyword id="KW-1278">Translocase</keyword>
<evidence type="ECO:0000255" key="1">
    <source>
        <dbReference type="HAMAP-Rule" id="MF_01501"/>
    </source>
</evidence>
<evidence type="ECO:0000305" key="2"/>